<name>POMT2_MOUSE</name>
<dbReference type="EC" id="2.4.1.109"/>
<dbReference type="EMBL" id="AY090481">
    <property type="protein sequence ID" value="AAM12047.1"/>
    <property type="molecule type" value="mRNA"/>
</dbReference>
<dbReference type="EMBL" id="AY090482">
    <property type="protein sequence ID" value="AAM12048.1"/>
    <property type="molecule type" value="mRNA"/>
</dbReference>
<dbReference type="EMBL" id="AY090483">
    <property type="protein sequence ID" value="AAM09080.1"/>
    <property type="molecule type" value="Genomic_DNA"/>
</dbReference>
<dbReference type="EMBL" id="AY090483">
    <property type="protein sequence ID" value="AAM09081.1"/>
    <property type="molecule type" value="Genomic_DNA"/>
</dbReference>
<dbReference type="EMBL" id="AY028993">
    <property type="protein sequence ID" value="AAK30026.1"/>
    <property type="molecule type" value="Genomic_DNA"/>
</dbReference>
<dbReference type="EMBL" id="AF246235">
    <property type="protein sequence ID" value="AAL85627.1"/>
    <property type="molecule type" value="mRNA"/>
</dbReference>
<dbReference type="EMBL" id="AK050915">
    <property type="protein sequence ID" value="BAC34458.1"/>
    <property type="molecule type" value="mRNA"/>
</dbReference>
<dbReference type="EMBL" id="BC052045">
    <property type="protein sequence ID" value="AAH52045.1"/>
    <property type="molecule type" value="mRNA"/>
</dbReference>
<dbReference type="CCDS" id="CCDS26070.1">
    <molecule id="Q8BGQ4-1"/>
</dbReference>
<dbReference type="RefSeq" id="NP_700464.2">
    <molecule id="Q8BGQ4-1"/>
    <property type="nucleotide sequence ID" value="NM_153415.4"/>
</dbReference>
<dbReference type="SMR" id="Q8BGQ4"/>
<dbReference type="BioGRID" id="229958">
    <property type="interactions" value="2"/>
</dbReference>
<dbReference type="FunCoup" id="Q8BGQ4">
    <property type="interactions" value="2597"/>
</dbReference>
<dbReference type="STRING" id="10090.ENSMUSP00000035260"/>
<dbReference type="CAZy" id="GT39">
    <property type="family name" value="Glycosyltransferase Family 39"/>
</dbReference>
<dbReference type="GlyConnect" id="2426">
    <molecule id="Q8BGQ4-2"/>
    <property type="glycosylation" value="1 N-Linked glycan (1 site)"/>
</dbReference>
<dbReference type="GlyCosmos" id="Q8BGQ4">
    <property type="glycosylation" value="6 sites, No reported glycans"/>
</dbReference>
<dbReference type="GlyGen" id="Q8BGQ4">
    <property type="glycosylation" value="6 sites, 3 N-linked glycans (4 sites)"/>
</dbReference>
<dbReference type="iPTMnet" id="Q8BGQ4"/>
<dbReference type="PhosphoSitePlus" id="Q8BGQ4"/>
<dbReference type="PaxDb" id="10090-ENSMUSP00000035260"/>
<dbReference type="ProteomicsDB" id="291635">
    <molecule id="Q8BGQ4-1"/>
</dbReference>
<dbReference type="ProteomicsDB" id="291636">
    <molecule id="Q8BGQ4-2"/>
</dbReference>
<dbReference type="ProteomicsDB" id="291637">
    <molecule id="Q8BGQ4-3"/>
</dbReference>
<dbReference type="Pumba" id="Q8BGQ4"/>
<dbReference type="Antibodypedia" id="67">
    <property type="antibodies" value="138 antibodies from 23 providers"/>
</dbReference>
<dbReference type="DNASU" id="217734"/>
<dbReference type="Ensembl" id="ENSMUST00000037788.6">
    <molecule id="Q8BGQ4-1"/>
    <property type="protein sequence ID" value="ENSMUSP00000035260.5"/>
    <property type="gene ID" value="ENSMUSG00000034126.6"/>
</dbReference>
<dbReference type="Ensembl" id="ENSMUST00000222634.2">
    <molecule id="Q8BGQ4-2"/>
    <property type="protein sequence ID" value="ENSMUSP00000152370.2"/>
    <property type="gene ID" value="ENSMUSG00000034126.6"/>
</dbReference>
<dbReference type="GeneID" id="217734"/>
<dbReference type="KEGG" id="mmu:217734"/>
<dbReference type="UCSC" id="uc007oij.1">
    <molecule id="Q8BGQ4-1"/>
    <property type="organism name" value="mouse"/>
</dbReference>
<dbReference type="AGR" id="MGI:2444430"/>
<dbReference type="CTD" id="29954"/>
<dbReference type="MGI" id="MGI:2444430">
    <property type="gene designation" value="Pomt2"/>
</dbReference>
<dbReference type="VEuPathDB" id="HostDB:ENSMUSG00000034126"/>
<dbReference type="eggNOG" id="KOG3359">
    <property type="taxonomic scope" value="Eukaryota"/>
</dbReference>
<dbReference type="GeneTree" id="ENSGT00940000156829"/>
<dbReference type="HOGENOM" id="CLU_008438_5_1_1"/>
<dbReference type="InParanoid" id="Q8BGQ4"/>
<dbReference type="OMA" id="MCGWDDN"/>
<dbReference type="OrthoDB" id="5561486at2759"/>
<dbReference type="PhylomeDB" id="Q8BGQ4"/>
<dbReference type="TreeFam" id="TF300552"/>
<dbReference type="Reactome" id="R-MMU-5173105">
    <property type="pathway name" value="O-linked glycosylation"/>
</dbReference>
<dbReference type="UniPathway" id="UPA00378"/>
<dbReference type="BioGRID-ORCS" id="217734">
    <property type="hits" value="4 hits in 78 CRISPR screens"/>
</dbReference>
<dbReference type="ChiTaRS" id="Pomt2">
    <property type="organism name" value="mouse"/>
</dbReference>
<dbReference type="PRO" id="PR:Q8BGQ4"/>
<dbReference type="Proteomes" id="UP000000589">
    <property type="component" value="Chromosome 12"/>
</dbReference>
<dbReference type="RNAct" id="Q8BGQ4">
    <property type="molecule type" value="protein"/>
</dbReference>
<dbReference type="Bgee" id="ENSMUSG00000034126">
    <property type="expression patterns" value="Expressed in spermatid and 223 other cell types or tissues"/>
</dbReference>
<dbReference type="GO" id="GO:0005829">
    <property type="term" value="C:cytosol"/>
    <property type="evidence" value="ECO:0007669"/>
    <property type="project" value="Ensembl"/>
</dbReference>
<dbReference type="GO" id="GO:0031502">
    <property type="term" value="C:dolichyl-phosphate-mannose-protein mannosyltransferase complex"/>
    <property type="evidence" value="ECO:0000314"/>
    <property type="project" value="MGI"/>
</dbReference>
<dbReference type="GO" id="GO:0005789">
    <property type="term" value="C:endoplasmic reticulum membrane"/>
    <property type="evidence" value="ECO:0000250"/>
    <property type="project" value="UniProtKB"/>
</dbReference>
<dbReference type="GO" id="GO:0005730">
    <property type="term" value="C:nucleolus"/>
    <property type="evidence" value="ECO:0007669"/>
    <property type="project" value="Ensembl"/>
</dbReference>
<dbReference type="GO" id="GO:0005654">
    <property type="term" value="C:nucleoplasm"/>
    <property type="evidence" value="ECO:0007669"/>
    <property type="project" value="Ensembl"/>
</dbReference>
<dbReference type="GO" id="GO:0004169">
    <property type="term" value="F:dolichyl-phosphate-mannose-protein mannosyltransferase activity"/>
    <property type="evidence" value="ECO:0007669"/>
    <property type="project" value="UniProtKB-EC"/>
</dbReference>
<dbReference type="GO" id="GO:0000030">
    <property type="term" value="F:mannosyltransferase activity"/>
    <property type="evidence" value="ECO:0000250"/>
    <property type="project" value="UniProtKB"/>
</dbReference>
<dbReference type="GO" id="GO:0071711">
    <property type="term" value="P:basement membrane organization"/>
    <property type="evidence" value="ECO:0000315"/>
    <property type="project" value="MGI"/>
</dbReference>
<dbReference type="GO" id="GO:0021542">
    <property type="term" value="P:dentate gyrus development"/>
    <property type="evidence" value="ECO:0000315"/>
    <property type="project" value="MGI"/>
</dbReference>
<dbReference type="GO" id="GO:0035269">
    <property type="term" value="P:protein O-linked mannosylation"/>
    <property type="evidence" value="ECO:0000250"/>
    <property type="project" value="UniProtKB"/>
</dbReference>
<dbReference type="GO" id="GO:0150103">
    <property type="term" value="P:reactive gliosis"/>
    <property type="evidence" value="ECO:0000315"/>
    <property type="project" value="MGI"/>
</dbReference>
<dbReference type="CDD" id="cd23282">
    <property type="entry name" value="beta-trefoil_MIR_POMT2"/>
    <property type="match status" value="1"/>
</dbReference>
<dbReference type="FunFam" id="2.80.10.50:FF:000026">
    <property type="entry name" value="Blast:Protein O-mannosyl-transferase 2"/>
    <property type="match status" value="1"/>
</dbReference>
<dbReference type="Gene3D" id="2.80.10.50">
    <property type="match status" value="1"/>
</dbReference>
<dbReference type="InterPro" id="IPR027005">
    <property type="entry name" value="GlyclTrfase_39-like"/>
</dbReference>
<dbReference type="InterPro" id="IPR003342">
    <property type="entry name" value="Glyco_trans_39/83"/>
</dbReference>
<dbReference type="InterPro" id="IPR036300">
    <property type="entry name" value="MIR_dom_sf"/>
</dbReference>
<dbReference type="InterPro" id="IPR016093">
    <property type="entry name" value="MIR_motif"/>
</dbReference>
<dbReference type="InterPro" id="IPR032421">
    <property type="entry name" value="PMT_4TMC"/>
</dbReference>
<dbReference type="PANTHER" id="PTHR10050">
    <property type="entry name" value="DOLICHYL-PHOSPHATE-MANNOSE--PROTEIN MANNOSYLTRANSFERASE"/>
    <property type="match status" value="1"/>
</dbReference>
<dbReference type="PANTHER" id="PTHR10050:SF46">
    <property type="entry name" value="PROTEIN O-MANNOSYL-TRANSFERASE 2"/>
    <property type="match status" value="1"/>
</dbReference>
<dbReference type="Pfam" id="PF02815">
    <property type="entry name" value="MIR"/>
    <property type="match status" value="1"/>
</dbReference>
<dbReference type="Pfam" id="PF02366">
    <property type="entry name" value="PMT"/>
    <property type="match status" value="1"/>
</dbReference>
<dbReference type="Pfam" id="PF16192">
    <property type="entry name" value="PMT_4TMC"/>
    <property type="match status" value="1"/>
</dbReference>
<dbReference type="SMART" id="SM00472">
    <property type="entry name" value="MIR"/>
    <property type="match status" value="3"/>
</dbReference>
<dbReference type="SUPFAM" id="SSF82109">
    <property type="entry name" value="MIR domain"/>
    <property type="match status" value="1"/>
</dbReference>
<dbReference type="PROSITE" id="PS50919">
    <property type="entry name" value="MIR"/>
    <property type="match status" value="3"/>
</dbReference>
<evidence type="ECO:0000250" key="1"/>
<evidence type="ECO:0000250" key="2">
    <source>
        <dbReference type="UniProtKB" id="Q9UKY4"/>
    </source>
</evidence>
<evidence type="ECO:0000255" key="3"/>
<evidence type="ECO:0000255" key="4">
    <source>
        <dbReference type="PROSITE-ProRule" id="PRU00131"/>
    </source>
</evidence>
<evidence type="ECO:0000269" key="5">
    <source>
    </source>
</evidence>
<evidence type="ECO:0000303" key="6">
    <source>
    </source>
</evidence>
<evidence type="ECO:0000303" key="7">
    <source>
    </source>
</evidence>
<evidence type="ECO:0000303" key="8">
    <source>
    </source>
</evidence>
<evidence type="ECO:0000303" key="9">
    <source ref="2"/>
</evidence>
<evidence type="ECO:0000305" key="10"/>
<organism>
    <name type="scientific">Mus musculus</name>
    <name type="common">Mouse</name>
    <dbReference type="NCBI Taxonomy" id="10090"/>
    <lineage>
        <taxon>Eukaryota</taxon>
        <taxon>Metazoa</taxon>
        <taxon>Chordata</taxon>
        <taxon>Craniata</taxon>
        <taxon>Vertebrata</taxon>
        <taxon>Euteleostomi</taxon>
        <taxon>Mammalia</taxon>
        <taxon>Eutheria</taxon>
        <taxon>Euarchontoglires</taxon>
        <taxon>Glires</taxon>
        <taxon>Rodentia</taxon>
        <taxon>Myomorpha</taxon>
        <taxon>Muroidea</taxon>
        <taxon>Muridae</taxon>
        <taxon>Murinae</taxon>
        <taxon>Mus</taxon>
        <taxon>Mus</taxon>
    </lineage>
</organism>
<gene>
    <name type="primary">Pomt2</name>
</gene>
<proteinExistence type="evidence at protein level"/>
<keyword id="KW-0025">Alternative splicing</keyword>
<keyword id="KW-0256">Endoplasmic reticulum</keyword>
<keyword id="KW-0325">Glycoprotein</keyword>
<keyword id="KW-0328">Glycosyltransferase</keyword>
<keyword id="KW-0472">Membrane</keyword>
<keyword id="KW-1185">Reference proteome</keyword>
<keyword id="KW-0677">Repeat</keyword>
<keyword id="KW-0808">Transferase</keyword>
<keyword id="KW-0812">Transmembrane</keyword>
<keyword id="KW-1133">Transmembrane helix</keyword>
<comment type="function">
    <text evidence="2">Transfers mannosyl residues to the hydroxyl group of serine or threonine residues. Coexpression of both POMT1 and POMT2 is necessary for enzyme activity, expression of either POMT1 or POMT2 alone is insufficient. Essentially dedicated to O-mannosylation of alpha-DAG1 and few other proteins but not of cadherins and protocaherins.</text>
</comment>
<comment type="catalytic activity">
    <reaction>
        <text>a di-trans,poly-cis-dolichyl beta-D-mannosyl phosphate + L-seryl-[protein] = 3-O-(alpha-D-mannosyl)-L-seryl-[protein] + a di-trans,poly-cis-dolichyl phosphate + H(+)</text>
        <dbReference type="Rhea" id="RHEA:17377"/>
        <dbReference type="Rhea" id="RHEA-COMP:9863"/>
        <dbReference type="Rhea" id="RHEA-COMP:13546"/>
        <dbReference type="Rhea" id="RHEA-COMP:19498"/>
        <dbReference type="Rhea" id="RHEA-COMP:19501"/>
        <dbReference type="ChEBI" id="CHEBI:15378"/>
        <dbReference type="ChEBI" id="CHEBI:29999"/>
        <dbReference type="ChEBI" id="CHEBI:57683"/>
        <dbReference type="ChEBI" id="CHEBI:58211"/>
        <dbReference type="ChEBI" id="CHEBI:137321"/>
        <dbReference type="EC" id="2.4.1.109"/>
    </reaction>
</comment>
<comment type="catalytic activity">
    <reaction>
        <text>a di-trans,poly-cis-dolichyl beta-D-mannosyl phosphate + L-threonyl-[protein] = 3-O-(alpha-D-mannosyl)-L-threonyl-[protein] + a di-trans,poly-cis-dolichyl phosphate + H(+)</text>
        <dbReference type="Rhea" id="RHEA:53396"/>
        <dbReference type="Rhea" id="RHEA-COMP:11060"/>
        <dbReference type="Rhea" id="RHEA-COMP:13547"/>
        <dbReference type="Rhea" id="RHEA-COMP:19498"/>
        <dbReference type="Rhea" id="RHEA-COMP:19501"/>
        <dbReference type="ChEBI" id="CHEBI:15378"/>
        <dbReference type="ChEBI" id="CHEBI:30013"/>
        <dbReference type="ChEBI" id="CHEBI:57683"/>
        <dbReference type="ChEBI" id="CHEBI:58211"/>
        <dbReference type="ChEBI" id="CHEBI:137323"/>
        <dbReference type="EC" id="2.4.1.109"/>
    </reaction>
</comment>
<comment type="pathway">
    <text>Protein modification; protein glycosylation.</text>
</comment>
<comment type="subcellular location">
    <subcellularLocation>
        <location evidence="1">Endoplasmic reticulum membrane</location>
        <topology evidence="1">Multi-pass membrane protein</topology>
    </subcellularLocation>
</comment>
<comment type="alternative products">
    <event type="alternative splicing"/>
    <isoform>
        <id>Q8BGQ4-1</id>
        <name>1</name>
        <sequence type="displayed"/>
    </isoform>
    <isoform>
        <id>Q8BGQ4-2</id>
        <name>2</name>
        <sequence type="described" ref="VSP_007597 VSP_007598 VSP_007599"/>
    </isoform>
    <isoform>
        <id>Q8BGQ4-3</id>
        <name>3</name>
        <sequence type="described" ref="VSP_007597"/>
    </isoform>
</comment>
<comment type="tissue specificity">
    <text evidence="5">Ubiquitous. Highly expressed in the acrosome of cap phase spermatids, in spermatocytes and liver. Isoform 1 seems to be testis-specific.</text>
</comment>
<comment type="PTM">
    <text evidence="5">N-glycosylated.</text>
</comment>
<comment type="miscellaneous">
    <molecule>Isoform 3</molecule>
    <text evidence="10">May be produced by use of an alternative promoter.</text>
</comment>
<comment type="similarity">
    <text evidence="10">Belongs to the glycosyltransferase 39 family.</text>
</comment>
<protein>
    <recommendedName>
        <fullName>Protein O-mannosyl-transferase 2</fullName>
        <ecNumber>2.4.1.109</ecNumber>
    </recommendedName>
    <alternativeName>
        <fullName>Dolichyl-phosphate-mannose--protein mannosyltransferase 2</fullName>
    </alternativeName>
</protein>
<feature type="chain" id="PRO_0000121489" description="Protein O-mannosyl-transferase 2">
    <location>
        <begin position="1"/>
        <end position="820"/>
    </location>
</feature>
<feature type="transmembrane region" description="Helical" evidence="3">
    <location>
        <begin position="124"/>
        <end position="144"/>
    </location>
</feature>
<feature type="transmembrane region" description="Helical" evidence="3">
    <location>
        <begin position="170"/>
        <end position="190"/>
    </location>
</feature>
<feature type="transmembrane region" description="Helical" evidence="3">
    <location>
        <begin position="216"/>
        <end position="236"/>
    </location>
</feature>
<feature type="transmembrane region" description="Helical" evidence="3">
    <location>
        <begin position="261"/>
        <end position="281"/>
    </location>
</feature>
<feature type="transmembrane region" description="Helical" evidence="3">
    <location>
        <begin position="301"/>
        <end position="321"/>
    </location>
</feature>
<feature type="transmembrane region" description="Helical" evidence="3">
    <location>
        <begin position="353"/>
        <end position="373"/>
    </location>
</feature>
<feature type="transmembrane region" description="Helical" evidence="3">
    <location>
        <begin position="659"/>
        <end position="679"/>
    </location>
</feature>
<feature type="transmembrane region" description="Helical" evidence="3">
    <location>
        <begin position="713"/>
        <end position="733"/>
    </location>
</feature>
<feature type="transmembrane region" description="Helical" evidence="3">
    <location>
        <begin position="735"/>
        <end position="755"/>
    </location>
</feature>
<feature type="transmembrane region" description="Helical" evidence="3">
    <location>
        <begin position="774"/>
        <end position="794"/>
    </location>
</feature>
<feature type="domain" description="MIR 1" evidence="4">
    <location>
        <begin position="404"/>
        <end position="460"/>
    </location>
</feature>
<feature type="domain" description="MIR 2" evidence="4">
    <location>
        <begin position="473"/>
        <end position="529"/>
    </location>
</feature>
<feature type="domain" description="MIR 3" evidence="4">
    <location>
        <begin position="534"/>
        <end position="591"/>
    </location>
</feature>
<feature type="glycosylation site" description="N-linked (GlcNAc...) asparagine" evidence="3">
    <location>
        <position position="168"/>
    </location>
</feature>
<feature type="glycosylation site" description="N-linked (GlcNAc...) asparagine" evidence="3">
    <location>
        <position position="376"/>
    </location>
</feature>
<feature type="glycosylation site" description="N-linked (GlcNAc...) asparagine" evidence="3">
    <location>
        <position position="400"/>
    </location>
</feature>
<feature type="glycosylation site" description="N-linked (GlcNAc...) asparagine" evidence="3">
    <location>
        <position position="515"/>
    </location>
</feature>
<feature type="glycosylation site" description="N-linked (GlcNAc...) asparagine" evidence="3">
    <location>
        <position position="598"/>
    </location>
</feature>
<feature type="glycosylation site" description="N-linked (GlcNAc...) asparagine" evidence="3">
    <location>
        <position position="653"/>
    </location>
</feature>
<feature type="splice variant" id="VSP_007597" description="In isoform 2 and isoform 3." evidence="6 7 8 9">
    <location>
        <begin position="1"/>
        <end position="70"/>
    </location>
</feature>
<feature type="splice variant" id="VSP_007598" description="In isoform 2." evidence="7">
    <original>VWWLNLV</original>
    <variation>SIPALSA</variation>
    <location>
        <begin position="667"/>
        <end position="673"/>
    </location>
</feature>
<feature type="splice variant" id="VSP_007599" description="In isoform 2." evidence="7">
    <location>
        <begin position="674"/>
        <end position="820"/>
    </location>
</feature>
<accession>Q8BGQ4</accession>
<accession>Q8R4Z0</accession>
<reference key="1">
    <citation type="journal article" date="2002" name="Glycobiology">
        <title>Characterization of POMT2, a novel member of the PMT protein O-mannosyltransferase family specifically localized to the acrosome of mammalian spermatids.</title>
        <authorList>
            <person name="Willer T."/>
            <person name="Amselgruber W."/>
            <person name="Deutzmann R."/>
            <person name="Strahl S."/>
        </authorList>
    </citation>
    <scope>NUCLEOTIDE SEQUENCE [GENOMIC DNA / MRNA] (ISOFORMS 1 AND 3)</scope>
    <scope>TISSUE SPECIFICITY</scope>
    <scope>GLYCOSYLATION</scope>
    <source>
        <strain>BALB/cJ</strain>
        <strain>C57BL/6J</strain>
        <tissue>Testis</tissue>
    </source>
</reference>
<reference key="2">
    <citation type="submission" date="2000-03" db="EMBL/GenBank/DDBJ databases">
        <title>A putative mouse O-mannosyltransferase POMT2.</title>
        <authorList>
            <person name="Wang X."/>
            <person name="Jigami Y."/>
        </authorList>
    </citation>
    <scope>NUCLEOTIDE SEQUENCE [MRNA] (ISOFORM 3)</scope>
    <source>
        <strain>BALB/cJ</strain>
    </source>
</reference>
<reference key="3">
    <citation type="journal article" date="2005" name="Science">
        <title>The transcriptional landscape of the mammalian genome.</title>
        <authorList>
            <person name="Carninci P."/>
            <person name="Kasukawa T."/>
            <person name="Katayama S."/>
            <person name="Gough J."/>
            <person name="Frith M.C."/>
            <person name="Maeda N."/>
            <person name="Oyama R."/>
            <person name="Ravasi T."/>
            <person name="Lenhard B."/>
            <person name="Wells C."/>
            <person name="Kodzius R."/>
            <person name="Shimokawa K."/>
            <person name="Bajic V.B."/>
            <person name="Brenner S.E."/>
            <person name="Batalov S."/>
            <person name="Forrest A.R."/>
            <person name="Zavolan M."/>
            <person name="Davis M.J."/>
            <person name="Wilming L.G."/>
            <person name="Aidinis V."/>
            <person name="Allen J.E."/>
            <person name="Ambesi-Impiombato A."/>
            <person name="Apweiler R."/>
            <person name="Aturaliya R.N."/>
            <person name="Bailey T.L."/>
            <person name="Bansal M."/>
            <person name="Baxter L."/>
            <person name="Beisel K.W."/>
            <person name="Bersano T."/>
            <person name="Bono H."/>
            <person name="Chalk A.M."/>
            <person name="Chiu K.P."/>
            <person name="Choudhary V."/>
            <person name="Christoffels A."/>
            <person name="Clutterbuck D.R."/>
            <person name="Crowe M.L."/>
            <person name="Dalla E."/>
            <person name="Dalrymple B.P."/>
            <person name="de Bono B."/>
            <person name="Della Gatta G."/>
            <person name="di Bernardo D."/>
            <person name="Down T."/>
            <person name="Engstrom P."/>
            <person name="Fagiolini M."/>
            <person name="Faulkner G."/>
            <person name="Fletcher C.F."/>
            <person name="Fukushima T."/>
            <person name="Furuno M."/>
            <person name="Futaki S."/>
            <person name="Gariboldi M."/>
            <person name="Georgii-Hemming P."/>
            <person name="Gingeras T.R."/>
            <person name="Gojobori T."/>
            <person name="Green R.E."/>
            <person name="Gustincich S."/>
            <person name="Harbers M."/>
            <person name="Hayashi Y."/>
            <person name="Hensch T.K."/>
            <person name="Hirokawa N."/>
            <person name="Hill D."/>
            <person name="Huminiecki L."/>
            <person name="Iacono M."/>
            <person name="Ikeo K."/>
            <person name="Iwama A."/>
            <person name="Ishikawa T."/>
            <person name="Jakt M."/>
            <person name="Kanapin A."/>
            <person name="Katoh M."/>
            <person name="Kawasawa Y."/>
            <person name="Kelso J."/>
            <person name="Kitamura H."/>
            <person name="Kitano H."/>
            <person name="Kollias G."/>
            <person name="Krishnan S.P."/>
            <person name="Kruger A."/>
            <person name="Kummerfeld S.K."/>
            <person name="Kurochkin I.V."/>
            <person name="Lareau L.F."/>
            <person name="Lazarevic D."/>
            <person name="Lipovich L."/>
            <person name="Liu J."/>
            <person name="Liuni S."/>
            <person name="McWilliam S."/>
            <person name="Madan Babu M."/>
            <person name="Madera M."/>
            <person name="Marchionni L."/>
            <person name="Matsuda H."/>
            <person name="Matsuzawa S."/>
            <person name="Miki H."/>
            <person name="Mignone F."/>
            <person name="Miyake S."/>
            <person name="Morris K."/>
            <person name="Mottagui-Tabar S."/>
            <person name="Mulder N."/>
            <person name="Nakano N."/>
            <person name="Nakauchi H."/>
            <person name="Ng P."/>
            <person name="Nilsson R."/>
            <person name="Nishiguchi S."/>
            <person name="Nishikawa S."/>
            <person name="Nori F."/>
            <person name="Ohara O."/>
            <person name="Okazaki Y."/>
            <person name="Orlando V."/>
            <person name="Pang K.C."/>
            <person name="Pavan W.J."/>
            <person name="Pavesi G."/>
            <person name="Pesole G."/>
            <person name="Petrovsky N."/>
            <person name="Piazza S."/>
            <person name="Reed J."/>
            <person name="Reid J.F."/>
            <person name="Ring B.Z."/>
            <person name="Ringwald M."/>
            <person name="Rost B."/>
            <person name="Ruan Y."/>
            <person name="Salzberg S.L."/>
            <person name="Sandelin A."/>
            <person name="Schneider C."/>
            <person name="Schoenbach C."/>
            <person name="Sekiguchi K."/>
            <person name="Semple C.A."/>
            <person name="Seno S."/>
            <person name="Sessa L."/>
            <person name="Sheng Y."/>
            <person name="Shibata Y."/>
            <person name="Shimada H."/>
            <person name="Shimada K."/>
            <person name="Silva D."/>
            <person name="Sinclair B."/>
            <person name="Sperling S."/>
            <person name="Stupka E."/>
            <person name="Sugiura K."/>
            <person name="Sultana R."/>
            <person name="Takenaka Y."/>
            <person name="Taki K."/>
            <person name="Tammoja K."/>
            <person name="Tan S.L."/>
            <person name="Tang S."/>
            <person name="Taylor M.S."/>
            <person name="Tegner J."/>
            <person name="Teichmann S.A."/>
            <person name="Ueda H.R."/>
            <person name="van Nimwegen E."/>
            <person name="Verardo R."/>
            <person name="Wei C.L."/>
            <person name="Yagi K."/>
            <person name="Yamanishi H."/>
            <person name="Zabarovsky E."/>
            <person name="Zhu S."/>
            <person name="Zimmer A."/>
            <person name="Hide W."/>
            <person name="Bult C."/>
            <person name="Grimmond S.M."/>
            <person name="Teasdale R.D."/>
            <person name="Liu E.T."/>
            <person name="Brusic V."/>
            <person name="Quackenbush J."/>
            <person name="Wahlestedt C."/>
            <person name="Mattick J.S."/>
            <person name="Hume D.A."/>
            <person name="Kai C."/>
            <person name="Sasaki D."/>
            <person name="Tomaru Y."/>
            <person name="Fukuda S."/>
            <person name="Kanamori-Katayama M."/>
            <person name="Suzuki M."/>
            <person name="Aoki J."/>
            <person name="Arakawa T."/>
            <person name="Iida J."/>
            <person name="Imamura K."/>
            <person name="Itoh M."/>
            <person name="Kato T."/>
            <person name="Kawaji H."/>
            <person name="Kawagashira N."/>
            <person name="Kawashima T."/>
            <person name="Kojima M."/>
            <person name="Kondo S."/>
            <person name="Konno H."/>
            <person name="Nakano K."/>
            <person name="Ninomiya N."/>
            <person name="Nishio T."/>
            <person name="Okada M."/>
            <person name="Plessy C."/>
            <person name="Shibata K."/>
            <person name="Shiraki T."/>
            <person name="Suzuki S."/>
            <person name="Tagami M."/>
            <person name="Waki K."/>
            <person name="Watahiki A."/>
            <person name="Okamura-Oho Y."/>
            <person name="Suzuki H."/>
            <person name="Kawai J."/>
            <person name="Hayashizaki Y."/>
        </authorList>
    </citation>
    <scope>NUCLEOTIDE SEQUENCE [LARGE SCALE MRNA] (ISOFORM 3)</scope>
    <source>
        <strain>C57BL/6J</strain>
    </source>
</reference>
<reference key="4">
    <citation type="journal article" date="2004" name="Genome Res.">
        <title>The status, quality, and expansion of the NIH full-length cDNA project: the Mammalian Gene Collection (MGC).</title>
        <authorList>
            <consortium name="The MGC Project Team"/>
        </authorList>
    </citation>
    <scope>NUCLEOTIDE SEQUENCE [LARGE SCALE MRNA] (ISOFORM 2)</scope>
    <source>
        <strain>C57BL/6J</strain>
        <tissue>Fetal brain</tissue>
    </source>
</reference>
<reference key="5">
    <citation type="journal article" date="2010" name="Cell">
        <title>A tissue-specific atlas of mouse protein phosphorylation and expression.</title>
        <authorList>
            <person name="Huttlin E.L."/>
            <person name="Jedrychowski M.P."/>
            <person name="Elias J.E."/>
            <person name="Goswami T."/>
            <person name="Rad R."/>
            <person name="Beausoleil S.A."/>
            <person name="Villen J."/>
            <person name="Haas W."/>
            <person name="Sowa M.E."/>
            <person name="Gygi S.P."/>
        </authorList>
    </citation>
    <scope>IDENTIFICATION BY MASS SPECTROMETRY [LARGE SCALE ANALYSIS]</scope>
    <source>
        <tissue>Testis</tissue>
    </source>
</reference>
<sequence length="820" mass="92386">MLYASGRLLAARAATTLSAPPRARGPALRGKRRELQIPWHLETPSYDPLTGQRTRPGVPPARRVILRKGRMPPAIGGGLAGSELRPRRGRCVPQAARAVSRDVVPQAAARKLKRPAWSSRRFQAAGWWATLAVVTLLSFATRFHRLDQPAHICWDETHFGKMGSYYINRTFFFDVHPPLGKMLIGLAGYLSGYDGTFLFQKPGDRYEHHSYMGMRGFCAFLGSWLIPFAYLTVLDLSKSFPAALLTAALLTFDTGCLTLSQYILLDPILMFFIMAAMLSMVKYNSCANRPFSAPWWFWLSLTGISLAGALGVKFVGLFIIVQVGLNTISDLWHLFGDLSLSLVTVGKHLTARILCLIVLPLVLYVTIFAVHVMVLNKSGPGDGFFSSAFQARLSGNSLHNASIPEHLAYGSVITVKNLRMAIGYLHSHRHLYPEGIGARQQQVTTYLHKDYNNLWIIKKYNANTDPLDPSFPVEFVRHGDIIRLEHKETTRNLHSHYHEAPLTRKHYQVTGYGINGTGDSNDFWRIEVVNRKFGNRIKVLRSRIRLIHLVTGCVLGSSGKILPKWGWEQLEVTCTPYLKETTNSIWNIEEHINPKLPNISLDVLQPSFPEILLESHMVMIRGNNGLKPKDNEFTSKPWHWPINYQGLRFSGANDTDFRVYLLGNPVVWWLNLVSIVLYLLSGSTIAVAMQRGIQLPAELQGLTKVLLRGGGQLLLGWMLHYFPFFLMGRILYFHHYFPAMLFSSMLTGILWDTLLRLCAWGLAPSPLGRRIHAVGILSLLLTTAYSFYLFHPLAYGMVGPLAQEPESPMAGLRWLESWDF</sequence>